<protein>
    <recommendedName>
        <fullName evidence="1">Cathelicidin antimicrobial peptide</fullName>
    </recommendedName>
    <component>
        <recommendedName>
            <fullName evidence="1">Antibacterial peptide FALL-39</fullName>
        </recommendedName>
        <alternativeName>
            <fullName evidence="1">FALL-39 peptide antibiotic</fullName>
        </alternativeName>
    </component>
    <component>
        <recommendedName>
            <fullName evidence="1">Antibacterial peptide LL-37</fullName>
        </recommendedName>
    </component>
</protein>
<gene>
    <name evidence="1" type="primary">CAMP</name>
</gene>
<name>CAMP_NOMGA</name>
<dbReference type="EMBL" id="DQ471360">
    <property type="protein sequence ID" value="ABE96624.1"/>
    <property type="molecule type" value="Genomic_DNA"/>
</dbReference>
<dbReference type="SMR" id="Q1KLY2"/>
<dbReference type="GO" id="GO:0005615">
    <property type="term" value="C:extracellular space"/>
    <property type="evidence" value="ECO:0007669"/>
    <property type="project" value="TreeGrafter"/>
</dbReference>
<dbReference type="GO" id="GO:0031982">
    <property type="term" value="C:vesicle"/>
    <property type="evidence" value="ECO:0007669"/>
    <property type="project" value="UniProtKB-SubCell"/>
</dbReference>
<dbReference type="GO" id="GO:0001530">
    <property type="term" value="F:lipopolysaccharide binding"/>
    <property type="evidence" value="ECO:0007669"/>
    <property type="project" value="TreeGrafter"/>
</dbReference>
<dbReference type="GO" id="GO:0061844">
    <property type="term" value="P:antimicrobial humoral immune response mediated by antimicrobial peptide"/>
    <property type="evidence" value="ECO:0007669"/>
    <property type="project" value="TreeGrafter"/>
</dbReference>
<dbReference type="GO" id="GO:0050829">
    <property type="term" value="P:defense response to Gram-negative bacterium"/>
    <property type="evidence" value="ECO:0007669"/>
    <property type="project" value="TreeGrafter"/>
</dbReference>
<dbReference type="GO" id="GO:0050830">
    <property type="term" value="P:defense response to Gram-positive bacterium"/>
    <property type="evidence" value="ECO:0007669"/>
    <property type="project" value="TreeGrafter"/>
</dbReference>
<dbReference type="GO" id="GO:0045087">
    <property type="term" value="P:innate immune response"/>
    <property type="evidence" value="ECO:0007669"/>
    <property type="project" value="UniProtKB-KW"/>
</dbReference>
<dbReference type="GO" id="GO:0042119">
    <property type="term" value="P:neutrophil activation"/>
    <property type="evidence" value="ECO:0000250"/>
    <property type="project" value="UniProtKB"/>
</dbReference>
<dbReference type="FunFam" id="3.10.450.10:FF:000003">
    <property type="entry name" value="Cathelicidin antimicrobial peptide"/>
    <property type="match status" value="1"/>
</dbReference>
<dbReference type="Gene3D" id="3.10.450.10">
    <property type="match status" value="1"/>
</dbReference>
<dbReference type="InterPro" id="IPR001894">
    <property type="entry name" value="Cathelicidin-like"/>
</dbReference>
<dbReference type="InterPro" id="IPR018216">
    <property type="entry name" value="Cathelicidin_CS"/>
</dbReference>
<dbReference type="InterPro" id="IPR022746">
    <property type="entry name" value="Cathlecidin_C"/>
</dbReference>
<dbReference type="InterPro" id="IPR046350">
    <property type="entry name" value="Cystatin_sf"/>
</dbReference>
<dbReference type="PANTHER" id="PTHR10206">
    <property type="entry name" value="CATHELICIDIN"/>
    <property type="match status" value="1"/>
</dbReference>
<dbReference type="PANTHER" id="PTHR10206:SF2">
    <property type="entry name" value="CATHELICIDIN ANTIMICROBIAL PEPTIDE"/>
    <property type="match status" value="1"/>
</dbReference>
<dbReference type="Pfam" id="PF12153">
    <property type="entry name" value="CAP18_C"/>
    <property type="match status" value="1"/>
</dbReference>
<dbReference type="Pfam" id="PF00666">
    <property type="entry name" value="Cathelicidins"/>
    <property type="match status" value="1"/>
</dbReference>
<dbReference type="SUPFAM" id="SSF54403">
    <property type="entry name" value="Cystatin/monellin"/>
    <property type="match status" value="1"/>
</dbReference>
<dbReference type="PROSITE" id="PS00946">
    <property type="entry name" value="CATHELICIDINS_1"/>
    <property type="match status" value="1"/>
</dbReference>
<dbReference type="PROSITE" id="PS00947">
    <property type="entry name" value="CATHELICIDINS_2"/>
    <property type="match status" value="1"/>
</dbReference>
<proteinExistence type="inferred from homology"/>
<accession>Q1KLY2</accession>
<comment type="function">
    <text evidence="1">Antimicrobial protein that is an integral component of the innate immune system (By similarity). Binds to bacterial lipopolysaccharides (LPS) (By similarity). Acts via neutrophil N-formyl peptide receptors to enhance the release of CXCL2 (By similarity). Postsecretory processing generates multiple cathelicidin antimicrobial peptides with various lengths which act as a topical antimicrobial defense in sweat on skin (By similarity). The unprocessed precursor form, cathelicidin antimicrobial peptide, inhibits the growth of Gram-negative E.coli and E.aerogenes with efficiencies comparable to that of the mature peptide LL-37 (in vitro) (By similarity).</text>
</comment>
<comment type="function">
    <molecule>Antibacterial peptide LL-37</molecule>
    <text evidence="1">Antimicrobial peptide that is an integral component of the innate immune system (By similarity). Binds to bacterial lipopolysaccharides (LPS) (By similarity). Causes membrane permeabilization by forming transmembrane pores (in vitro) (By similarity). Causes lysis of E.coli (By similarity). Exhibits antimicrobial activity against Gram-negative bacteria such as P.aeruginosa, S.typhimurium, E.aerogenes, E.coli and P.syringae, Gram-positive bacteria such as L.monocytogenes, S.epidermidis, S.pyogenes and S.aureus, as well as vancomycin-resistant enterococci (in vitro) (By similarity). Exhibits antimicrobial activity against methicillin-resistant S.aureus, P.mirabilis, and C.albicans in low-salt media, but not in media containing 100 mM NaCl (in vitro) (By similarity). Forms chiral supramolecular assemblies with quinolone signal (PQS) molecules of P.aeruginosa, which may lead to interference of bacterial quorum signaling and perturbance of bacterial biofilm formation (By similarity). May form supramolecular fiber-like assemblies on bacterial membranes (By similarity). Induces cytokine and chemokine producation as well as TNF/TNFA and CSF2/GMCSF production in normal human keratinocytes (By similarity). Exhibits hemolytic activity against red blood cells (By similarity).</text>
</comment>
<comment type="function">
    <molecule>Antibacterial peptide FALL-39</molecule>
    <text evidence="1">Exhibits antimicrobial activity against E.coli and B.megaterium (in vitro).</text>
</comment>
<comment type="subunit">
    <molecule>Antibacterial peptide LL-37</molecule>
    <text evidence="1">Monomer, homodimer or homotrimer (in vitro) (By similarity). Oligomerizes as tetra- or hexamer in solution (in vitro) (By similarity).</text>
</comment>
<comment type="subcellular location">
    <subcellularLocation>
        <location evidence="2">Secreted</location>
    </subcellularLocation>
    <subcellularLocation>
        <location evidence="2">Vesicle</location>
    </subcellularLocation>
    <text evidence="2">Stored as pro-peptide in granules and phagolysosomes of neutrophils (By similarity). Secreted in sweat onto skin (By similarity).</text>
</comment>
<comment type="domain">
    <text evidence="2">The cathelin-like domain (CLD), which is the propeptide part, does not seem to exhibit auto-inhibitory function, as it does not inhibit the antibacterial activity of antibacterial peptide LL-37.</text>
</comment>
<comment type="domain">
    <molecule>Antibacterial peptide LL-37</molecule>
    <text evidence="2">Undergoes conformational change in the presence of lipid A, transitioning from a random coil to an alpha-helical structure.</text>
</comment>
<comment type="domain">
    <molecule>Antibacterial peptide LL-37</molecule>
    <text evidence="2">Residues 17-29 of LL-37 represent the active core of the antimicrobial peptide. Forms ribbon-like fibrils and exhibits antibacterial activity against Gram-positive M.luteus (By similarity). Also exhibits antibacterial activity against Gram-negative E.coli and P.fluorescens (By similarity).</text>
</comment>
<comment type="PTM">
    <text evidence="1">Proteolytically cleaved by proteinase PRTN3 into antibacterial peptide LL-37 (By similarity). Proteolytically cleaved by cathepsin CTSG and neutrophil elastase ELANE (By similarity).</text>
</comment>
<comment type="PTM">
    <molecule>Antibacterial peptide LL-37</molecule>
    <text evidence="1">Resistant to proteolytic degradation in solution, and when bound to both zwitterionic (mimicking mammalian membranes) and negatively charged membranes (mimicking bacterial membranes).</text>
</comment>
<comment type="PTM">
    <text evidence="1">After secretion onto the skin surface, the CAMP gene product is processed by a serine protease-dependent mechanism into multiple novel antimicrobial peptides distinct from and shorter than cathelicidin LL-37 (By similarity). These peptides show enhanced antimicrobial action, acquiring the ability to kill skin pathogens such as S.aureus, E.coli and C.albicans. These peptides have lost the ability to stimulate CXCL8/IL8 release from keratinocytes (By similarity). The peptides act synergistically, killing bacteria at lower concentrations when present together, and maintain activity at increased salt condition (By similarity).</text>
</comment>
<comment type="similarity">
    <text evidence="4">Belongs to the cathelicidin family.</text>
</comment>
<organism>
    <name type="scientific">Nomascus gabriellae</name>
    <name type="common">Red-cheeked gibbon</name>
    <dbReference type="NCBI Taxonomy" id="61852"/>
    <lineage>
        <taxon>Eukaryota</taxon>
        <taxon>Metazoa</taxon>
        <taxon>Chordata</taxon>
        <taxon>Craniata</taxon>
        <taxon>Vertebrata</taxon>
        <taxon>Euteleostomi</taxon>
        <taxon>Mammalia</taxon>
        <taxon>Eutheria</taxon>
        <taxon>Euarchontoglires</taxon>
        <taxon>Primates</taxon>
        <taxon>Haplorrhini</taxon>
        <taxon>Catarrhini</taxon>
        <taxon>Hylobatidae</taxon>
        <taxon>Nomascus</taxon>
    </lineage>
</organism>
<sequence>MKTQRDSPSLGRWSLVLLLLGLVMPLAIVAQVLSYQEAVLRAIDGINQRSSDANLYRLLDLDPRPTMDGDPDTPKPVSFTVKETVCPRTTQQSPEDCDFKKDGLVKRCVGTVILNQARDSFDISCDKDNRRFALPGNFFRKAREKIGKEFKRIVQRIKDFLQHLVPRTEA</sequence>
<reference key="1">
    <citation type="journal article" date="2006" name="J. Biol. Chem.">
        <title>Evolution of the primate cathelicidin. Correlation between structural variations and antimicrobial activity.</title>
        <authorList>
            <person name="Zelezetsky I."/>
            <person name="Pontillo A."/>
            <person name="Puzzi L."/>
            <person name="Antcheva N."/>
            <person name="Segat L."/>
            <person name="Pacor S."/>
            <person name="Crovella S."/>
            <person name="Tossi A."/>
        </authorList>
    </citation>
    <scope>NUCLEOTIDE SEQUENCE [GENOMIC DNA]</scope>
</reference>
<keyword id="KW-0044">Antibiotic</keyword>
<keyword id="KW-0929">Antimicrobial</keyword>
<keyword id="KW-0165">Cleavage on pair of basic residues</keyword>
<keyword id="KW-1015">Disulfide bond</keyword>
<keyword id="KW-0391">Immunity</keyword>
<keyword id="KW-0399">Innate immunity</keyword>
<keyword id="KW-0964">Secreted</keyword>
<keyword id="KW-0732">Signal</keyword>
<feature type="signal peptide" evidence="3">
    <location>
        <begin position="1"/>
        <end position="30"/>
    </location>
</feature>
<feature type="propeptide" id="PRO_0000251773" description="Cathelin-like domain (CLD)" evidence="1">
    <location>
        <begin position="31"/>
        <end position="131"/>
    </location>
</feature>
<feature type="peptide" id="PRO_0000251774" description="Antibacterial peptide FALL-39" evidence="1">
    <location>
        <begin position="132"/>
        <end position="170"/>
    </location>
</feature>
<feature type="peptide" id="PRO_0000251775" description="Antibacterial peptide LL-37" evidence="1">
    <location>
        <begin position="134"/>
        <end position="170"/>
    </location>
</feature>
<feature type="region of interest" description="Active core" evidence="1">
    <location>
        <begin position="150"/>
        <end position="162"/>
    </location>
</feature>
<feature type="disulfide bond" evidence="1">
    <location>
        <begin position="86"/>
        <end position="97"/>
    </location>
</feature>
<feature type="disulfide bond" evidence="1">
    <location>
        <begin position="108"/>
        <end position="125"/>
    </location>
</feature>
<evidence type="ECO:0000250" key="1">
    <source>
        <dbReference type="UniProtKB" id="P49913"/>
    </source>
</evidence>
<evidence type="ECO:0000250" key="2">
    <source>
        <dbReference type="UniProtKB" id="P54229"/>
    </source>
</evidence>
<evidence type="ECO:0000255" key="3"/>
<evidence type="ECO:0000305" key="4"/>